<dbReference type="EMBL" id="BA000022">
    <property type="protein sequence ID" value="BAA17593.1"/>
    <property type="molecule type" value="Genomic_DNA"/>
</dbReference>
<dbReference type="PIR" id="S77259">
    <property type="entry name" value="S77259"/>
</dbReference>
<dbReference type="SMR" id="P73553"/>
<dbReference type="FunCoup" id="P73553">
    <property type="interactions" value="202"/>
</dbReference>
<dbReference type="IntAct" id="P73553">
    <property type="interactions" value="1"/>
</dbReference>
<dbReference type="STRING" id="1148.gene:10498460"/>
<dbReference type="PaxDb" id="1148-1652673"/>
<dbReference type="EnsemblBacteria" id="BAA17593">
    <property type="protein sequence ID" value="BAA17593"/>
    <property type="gene ID" value="BAA17593"/>
</dbReference>
<dbReference type="KEGG" id="syn:slr0875"/>
<dbReference type="eggNOG" id="COG1970">
    <property type="taxonomic scope" value="Bacteria"/>
</dbReference>
<dbReference type="InParanoid" id="P73553"/>
<dbReference type="Proteomes" id="UP000001425">
    <property type="component" value="Chromosome"/>
</dbReference>
<dbReference type="GO" id="GO:0016020">
    <property type="term" value="C:membrane"/>
    <property type="evidence" value="ECO:0000318"/>
    <property type="project" value="GO_Central"/>
</dbReference>
<dbReference type="GO" id="GO:0005886">
    <property type="term" value="C:plasma membrane"/>
    <property type="evidence" value="ECO:0007669"/>
    <property type="project" value="UniProtKB-SubCell"/>
</dbReference>
<dbReference type="GO" id="GO:0008381">
    <property type="term" value="F:mechanosensitive monoatomic ion channel activity"/>
    <property type="evidence" value="ECO:0000318"/>
    <property type="project" value="GO_Central"/>
</dbReference>
<dbReference type="GO" id="GO:0006811">
    <property type="term" value="P:monoatomic ion transport"/>
    <property type="evidence" value="ECO:0000318"/>
    <property type="project" value="GO_Central"/>
</dbReference>
<dbReference type="FunFam" id="1.10.1200.120:FF:000010">
    <property type="entry name" value="Large-conductance mechanosensitive channel"/>
    <property type="match status" value="1"/>
</dbReference>
<dbReference type="Gene3D" id="1.10.1200.120">
    <property type="entry name" value="Large-conductance mechanosensitive channel, MscL, domain 1"/>
    <property type="match status" value="1"/>
</dbReference>
<dbReference type="HAMAP" id="MF_00115">
    <property type="entry name" value="MscL"/>
    <property type="match status" value="1"/>
</dbReference>
<dbReference type="InterPro" id="IPR019823">
    <property type="entry name" value="Mechanosensitive_channel_CS"/>
</dbReference>
<dbReference type="InterPro" id="IPR001185">
    <property type="entry name" value="MS_channel"/>
</dbReference>
<dbReference type="InterPro" id="IPR037673">
    <property type="entry name" value="MSC/AndL"/>
</dbReference>
<dbReference type="InterPro" id="IPR036019">
    <property type="entry name" value="MscL_channel"/>
</dbReference>
<dbReference type="NCBIfam" id="TIGR00220">
    <property type="entry name" value="mscL"/>
    <property type="match status" value="1"/>
</dbReference>
<dbReference type="PANTHER" id="PTHR30266:SF2">
    <property type="entry name" value="LARGE-CONDUCTANCE MECHANOSENSITIVE CHANNEL"/>
    <property type="match status" value="1"/>
</dbReference>
<dbReference type="PANTHER" id="PTHR30266">
    <property type="entry name" value="MECHANOSENSITIVE CHANNEL MSCL"/>
    <property type="match status" value="1"/>
</dbReference>
<dbReference type="Pfam" id="PF01741">
    <property type="entry name" value="MscL"/>
    <property type="match status" value="1"/>
</dbReference>
<dbReference type="PRINTS" id="PR01264">
    <property type="entry name" value="MECHCHANNEL"/>
</dbReference>
<dbReference type="SUPFAM" id="SSF81330">
    <property type="entry name" value="Gated mechanosensitive channel"/>
    <property type="match status" value="1"/>
</dbReference>
<dbReference type="PROSITE" id="PS01327">
    <property type="entry name" value="MSCL"/>
    <property type="match status" value="1"/>
</dbReference>
<sequence length="145" mass="15806">MVKSARQGAGGFWRDFKDFILRGNVVDLAVAVVIGGAFTSIVNAFVAWLMAVLLQPVLDQAGVSQLQDLPLGLGELVIAIINFLIIAFVIFLIIKAIEKMQRKKAVEEEIVAEAQPDPVLEAQTNLTDSINRLITTLENQQSSSQ</sequence>
<evidence type="ECO:0000255" key="1">
    <source>
        <dbReference type="HAMAP-Rule" id="MF_00115"/>
    </source>
</evidence>
<keyword id="KW-0997">Cell inner membrane</keyword>
<keyword id="KW-1003">Cell membrane</keyword>
<keyword id="KW-0407">Ion channel</keyword>
<keyword id="KW-0406">Ion transport</keyword>
<keyword id="KW-0472">Membrane</keyword>
<keyword id="KW-1185">Reference proteome</keyword>
<keyword id="KW-0812">Transmembrane</keyword>
<keyword id="KW-1133">Transmembrane helix</keyword>
<keyword id="KW-0813">Transport</keyword>
<feature type="chain" id="PRO_0000192469" description="Large-conductance mechanosensitive channel">
    <location>
        <begin position="1"/>
        <end position="145"/>
    </location>
</feature>
<feature type="transmembrane region" description="Helical" evidence="1">
    <location>
        <begin position="30"/>
        <end position="50"/>
    </location>
</feature>
<feature type="transmembrane region" description="Helical" evidence="1">
    <location>
        <begin position="74"/>
        <end position="94"/>
    </location>
</feature>
<accession>P73553</accession>
<proteinExistence type="inferred from homology"/>
<protein>
    <recommendedName>
        <fullName evidence="1">Large-conductance mechanosensitive channel</fullName>
    </recommendedName>
</protein>
<gene>
    <name evidence="1" type="primary">mscL</name>
    <name type="ordered locus">slr0875</name>
</gene>
<comment type="function">
    <text evidence="1">Channel that opens in response to stretch forces in the membrane lipid bilayer. May participate in the regulation of osmotic pressure changes within the cell.</text>
</comment>
<comment type="subunit">
    <text evidence="1">Homopentamer.</text>
</comment>
<comment type="subcellular location">
    <subcellularLocation>
        <location evidence="1">Cell inner membrane</location>
        <topology evidence="1">Multi-pass membrane protein</topology>
    </subcellularLocation>
</comment>
<comment type="similarity">
    <text evidence="1">Belongs to the MscL family.</text>
</comment>
<name>MSCL_SYNY3</name>
<organism>
    <name type="scientific">Synechocystis sp. (strain ATCC 27184 / PCC 6803 / Kazusa)</name>
    <dbReference type="NCBI Taxonomy" id="1111708"/>
    <lineage>
        <taxon>Bacteria</taxon>
        <taxon>Bacillati</taxon>
        <taxon>Cyanobacteriota</taxon>
        <taxon>Cyanophyceae</taxon>
        <taxon>Synechococcales</taxon>
        <taxon>Merismopediaceae</taxon>
        <taxon>Synechocystis</taxon>
    </lineage>
</organism>
<reference key="1">
    <citation type="journal article" date="1996" name="DNA Res.">
        <title>Sequence analysis of the genome of the unicellular cyanobacterium Synechocystis sp. strain PCC6803. II. Sequence determination of the entire genome and assignment of potential protein-coding regions.</title>
        <authorList>
            <person name="Kaneko T."/>
            <person name="Sato S."/>
            <person name="Kotani H."/>
            <person name="Tanaka A."/>
            <person name="Asamizu E."/>
            <person name="Nakamura Y."/>
            <person name="Miyajima N."/>
            <person name="Hirosawa M."/>
            <person name="Sugiura M."/>
            <person name="Sasamoto S."/>
            <person name="Kimura T."/>
            <person name="Hosouchi T."/>
            <person name="Matsuno A."/>
            <person name="Muraki A."/>
            <person name="Nakazaki N."/>
            <person name="Naruo K."/>
            <person name="Okumura S."/>
            <person name="Shimpo S."/>
            <person name="Takeuchi C."/>
            <person name="Wada T."/>
            <person name="Watanabe A."/>
            <person name="Yamada M."/>
            <person name="Yasuda M."/>
            <person name="Tabata S."/>
        </authorList>
    </citation>
    <scope>NUCLEOTIDE SEQUENCE [LARGE SCALE GENOMIC DNA]</scope>
    <source>
        <strain>ATCC 27184 / PCC 6803 / Kazusa</strain>
    </source>
</reference>